<dbReference type="EC" id="2.7.11.1"/>
<dbReference type="EMBL" id="AB012242">
    <property type="protein sequence ID" value="BAB09427.1"/>
    <property type="status" value="ALT_SEQ"/>
    <property type="molecule type" value="Genomic_DNA"/>
</dbReference>
<dbReference type="EMBL" id="CP002688">
    <property type="protein sequence ID" value="AED95718.1"/>
    <property type="molecule type" value="Genomic_DNA"/>
</dbReference>
<dbReference type="EMBL" id="FJ708794">
    <property type="protein sequence ID" value="ACN59385.1"/>
    <property type="molecule type" value="mRNA"/>
</dbReference>
<dbReference type="RefSeq" id="NP_199685.2">
    <property type="nucleotide sequence ID" value="NM_124251.4"/>
</dbReference>
<dbReference type="SMR" id="C0LGV0"/>
<dbReference type="BioGRID" id="20178">
    <property type="interactions" value="19"/>
</dbReference>
<dbReference type="FunCoup" id="C0LGV0">
    <property type="interactions" value="114"/>
</dbReference>
<dbReference type="IntAct" id="C0LGV0">
    <property type="interactions" value="18"/>
</dbReference>
<dbReference type="STRING" id="3702.C0LGV0"/>
<dbReference type="GlyGen" id="C0LGV0">
    <property type="glycosylation" value="12 sites"/>
</dbReference>
<dbReference type="PaxDb" id="3702-AT5G48740.1"/>
<dbReference type="ProteomicsDB" id="243138"/>
<dbReference type="EnsemblPlants" id="AT5G48740.1">
    <property type="protein sequence ID" value="AT5G48740.1"/>
    <property type="gene ID" value="AT5G48740"/>
</dbReference>
<dbReference type="GeneID" id="834932"/>
<dbReference type="Gramene" id="AT5G48740.1">
    <property type="protein sequence ID" value="AT5G48740.1"/>
    <property type="gene ID" value="AT5G48740"/>
</dbReference>
<dbReference type="KEGG" id="ath:AT5G48740"/>
<dbReference type="Araport" id="AT5G48740"/>
<dbReference type="TAIR" id="AT5G48740"/>
<dbReference type="eggNOG" id="ENOG502QW5Y">
    <property type="taxonomic scope" value="Eukaryota"/>
</dbReference>
<dbReference type="HOGENOM" id="CLU_000288_41_3_1"/>
<dbReference type="InParanoid" id="C0LGV0"/>
<dbReference type="OMA" id="IWDADED"/>
<dbReference type="OrthoDB" id="1882297at2759"/>
<dbReference type="PhylomeDB" id="C0LGV0"/>
<dbReference type="PRO" id="PR:C0LGV0"/>
<dbReference type="Proteomes" id="UP000006548">
    <property type="component" value="Chromosome 5"/>
</dbReference>
<dbReference type="ExpressionAtlas" id="C0LGV0">
    <property type="expression patterns" value="baseline and differential"/>
</dbReference>
<dbReference type="GO" id="GO:0016020">
    <property type="term" value="C:membrane"/>
    <property type="evidence" value="ECO:0007669"/>
    <property type="project" value="UniProtKB-SubCell"/>
</dbReference>
<dbReference type="GO" id="GO:0005524">
    <property type="term" value="F:ATP binding"/>
    <property type="evidence" value="ECO:0007669"/>
    <property type="project" value="UniProtKB-KW"/>
</dbReference>
<dbReference type="GO" id="GO:0106310">
    <property type="term" value="F:protein serine kinase activity"/>
    <property type="evidence" value="ECO:0007669"/>
    <property type="project" value="RHEA"/>
</dbReference>
<dbReference type="GO" id="GO:0004674">
    <property type="term" value="F:protein serine/threonine kinase activity"/>
    <property type="evidence" value="ECO:0007669"/>
    <property type="project" value="UniProtKB-KW"/>
</dbReference>
<dbReference type="CDD" id="cd14066">
    <property type="entry name" value="STKc_IRAK"/>
    <property type="match status" value="1"/>
</dbReference>
<dbReference type="FunFam" id="3.80.10.10:FF:000383">
    <property type="entry name" value="Leucine-rich repeat receptor protein kinase EMS1"/>
    <property type="match status" value="1"/>
</dbReference>
<dbReference type="FunFam" id="1.10.510.10:FF:000146">
    <property type="entry name" value="LRR receptor-like serine/threonine-protein kinase IOS1"/>
    <property type="match status" value="1"/>
</dbReference>
<dbReference type="FunFam" id="3.30.200.20:FF:000178">
    <property type="entry name" value="serine/threonine-protein kinase PBS1-like"/>
    <property type="match status" value="1"/>
</dbReference>
<dbReference type="Gene3D" id="2.60.120.430">
    <property type="entry name" value="Galactose-binding lectin"/>
    <property type="match status" value="1"/>
</dbReference>
<dbReference type="Gene3D" id="3.30.200.20">
    <property type="entry name" value="Phosphorylase Kinase, domain 1"/>
    <property type="match status" value="1"/>
</dbReference>
<dbReference type="Gene3D" id="3.80.10.10">
    <property type="entry name" value="Ribonuclease Inhibitor"/>
    <property type="match status" value="2"/>
</dbReference>
<dbReference type="Gene3D" id="1.10.510.10">
    <property type="entry name" value="Transferase(Phosphotransferase) domain 1"/>
    <property type="match status" value="1"/>
</dbReference>
<dbReference type="InterPro" id="IPR011009">
    <property type="entry name" value="Kinase-like_dom_sf"/>
</dbReference>
<dbReference type="InterPro" id="IPR001611">
    <property type="entry name" value="Leu-rich_rpt"/>
</dbReference>
<dbReference type="InterPro" id="IPR003591">
    <property type="entry name" value="Leu-rich_rpt_typical-subtyp"/>
</dbReference>
<dbReference type="InterPro" id="IPR032675">
    <property type="entry name" value="LRR_dom_sf"/>
</dbReference>
<dbReference type="InterPro" id="IPR024788">
    <property type="entry name" value="Malectin-like_Carb-bd_dom"/>
</dbReference>
<dbReference type="InterPro" id="IPR000719">
    <property type="entry name" value="Prot_kinase_dom"/>
</dbReference>
<dbReference type="InterPro" id="IPR017441">
    <property type="entry name" value="Protein_kinase_ATP_BS"/>
</dbReference>
<dbReference type="InterPro" id="IPR008271">
    <property type="entry name" value="Ser/Thr_kinase_AS"/>
</dbReference>
<dbReference type="PANTHER" id="PTHR45631">
    <property type="entry name" value="OS07G0107800 PROTEIN-RELATED"/>
    <property type="match status" value="1"/>
</dbReference>
<dbReference type="PANTHER" id="PTHR45631:SF21">
    <property type="entry name" value="PROTEIN KINASE DOMAIN-CONTAINING PROTEIN"/>
    <property type="match status" value="1"/>
</dbReference>
<dbReference type="Pfam" id="PF13855">
    <property type="entry name" value="LRR_8"/>
    <property type="match status" value="1"/>
</dbReference>
<dbReference type="Pfam" id="PF12819">
    <property type="entry name" value="Malectin_like"/>
    <property type="match status" value="1"/>
</dbReference>
<dbReference type="Pfam" id="PF00069">
    <property type="entry name" value="Pkinase"/>
    <property type="match status" value="1"/>
</dbReference>
<dbReference type="SMART" id="SM00369">
    <property type="entry name" value="LRR_TYP"/>
    <property type="match status" value="2"/>
</dbReference>
<dbReference type="SMART" id="SM00220">
    <property type="entry name" value="S_TKc"/>
    <property type="match status" value="1"/>
</dbReference>
<dbReference type="SUPFAM" id="SSF52058">
    <property type="entry name" value="L domain-like"/>
    <property type="match status" value="1"/>
</dbReference>
<dbReference type="SUPFAM" id="SSF56112">
    <property type="entry name" value="Protein kinase-like (PK-like)"/>
    <property type="match status" value="1"/>
</dbReference>
<dbReference type="PROSITE" id="PS51450">
    <property type="entry name" value="LRR"/>
    <property type="match status" value="4"/>
</dbReference>
<dbReference type="PROSITE" id="PS00107">
    <property type="entry name" value="PROTEIN_KINASE_ATP"/>
    <property type="match status" value="1"/>
</dbReference>
<dbReference type="PROSITE" id="PS50011">
    <property type="entry name" value="PROTEIN_KINASE_DOM"/>
    <property type="match status" value="1"/>
</dbReference>
<dbReference type="PROSITE" id="PS00108">
    <property type="entry name" value="PROTEIN_KINASE_ST"/>
    <property type="match status" value="1"/>
</dbReference>
<evidence type="ECO:0000250" key="1">
    <source>
        <dbReference type="UniProtKB" id="O48814"/>
    </source>
</evidence>
<evidence type="ECO:0000255" key="2"/>
<evidence type="ECO:0000255" key="3">
    <source>
        <dbReference type="PROSITE-ProRule" id="PRU00159"/>
    </source>
</evidence>
<evidence type="ECO:0000255" key="4">
    <source>
        <dbReference type="PROSITE-ProRule" id="PRU10027"/>
    </source>
</evidence>
<evidence type="ECO:0000305" key="5"/>
<name>Y5487_ARATH</name>
<gene>
    <name type="ordered locus">At5g48740</name>
    <name type="ORF">K24G6.7</name>
</gene>
<feature type="signal peptide" evidence="2">
    <location>
        <begin position="1"/>
        <end position="16"/>
    </location>
</feature>
<feature type="chain" id="PRO_0000387565" description="Probable LRR receptor-like serine/threonine-protein kinase At5g48740">
    <location>
        <begin position="17"/>
        <end position="895"/>
    </location>
</feature>
<feature type="topological domain" description="Extracellular" evidence="2">
    <location>
        <begin position="17"/>
        <end position="544"/>
    </location>
</feature>
<feature type="transmembrane region" description="Helical" evidence="2">
    <location>
        <begin position="545"/>
        <end position="565"/>
    </location>
</feature>
<feature type="topological domain" description="Cytoplasmic" evidence="2">
    <location>
        <begin position="566"/>
        <end position="895"/>
    </location>
</feature>
<feature type="repeat" description="LRR 1">
    <location>
        <begin position="385"/>
        <end position="407"/>
    </location>
</feature>
<feature type="repeat" description="LRR 2">
    <location>
        <begin position="408"/>
        <end position="430"/>
    </location>
</feature>
<feature type="repeat" description="LRR 3">
    <location>
        <begin position="431"/>
        <end position="453"/>
    </location>
</feature>
<feature type="repeat" description="LRR 4">
    <location>
        <begin position="454"/>
        <end position="477"/>
    </location>
</feature>
<feature type="repeat" description="LRR 5">
    <location>
        <begin position="478"/>
        <end position="500"/>
    </location>
</feature>
<feature type="repeat" description="LRR 6">
    <location>
        <begin position="511"/>
        <end position="532"/>
    </location>
</feature>
<feature type="domain" description="Protein kinase" evidence="3">
    <location>
        <begin position="606"/>
        <end position="888"/>
    </location>
</feature>
<feature type="active site" description="Proton acceptor" evidence="3 4">
    <location>
        <position position="732"/>
    </location>
</feature>
<feature type="binding site" evidence="3">
    <location>
        <begin position="612"/>
        <end position="620"/>
    </location>
    <ligand>
        <name>ATP</name>
        <dbReference type="ChEBI" id="CHEBI:30616"/>
    </ligand>
</feature>
<feature type="binding site" evidence="3">
    <location>
        <position position="634"/>
    </location>
    <ligand>
        <name>ATP</name>
        <dbReference type="ChEBI" id="CHEBI:30616"/>
    </ligand>
</feature>
<feature type="modified residue" description="Phosphotyrosine" evidence="1">
    <location>
        <position position="679"/>
    </location>
</feature>
<feature type="modified residue" description="Phosphoserine" evidence="1">
    <location>
        <position position="736"/>
    </location>
</feature>
<feature type="modified residue" description="Phosphothreonine" evidence="1">
    <location>
        <position position="767"/>
    </location>
</feature>
<feature type="modified residue" description="Phosphothreonine" evidence="1">
    <location>
        <position position="772"/>
    </location>
</feature>
<feature type="modified residue" description="Phosphotyrosine" evidence="1">
    <location>
        <position position="780"/>
    </location>
</feature>
<feature type="glycosylation site" description="N-linked (GlcNAc...) asparagine" evidence="2">
    <location>
        <position position="36"/>
    </location>
</feature>
<feature type="glycosylation site" description="N-linked (GlcNAc...) asparagine" evidence="2">
    <location>
        <position position="50"/>
    </location>
</feature>
<feature type="glycosylation site" description="N-linked (GlcNAc...) asparagine" evidence="2">
    <location>
        <position position="60"/>
    </location>
</feature>
<feature type="glycosylation site" description="N-linked (GlcNAc...) asparagine" evidence="2">
    <location>
        <position position="140"/>
    </location>
</feature>
<feature type="glycosylation site" description="N-linked (GlcNAc...) asparagine" evidence="2">
    <location>
        <position position="195"/>
    </location>
</feature>
<feature type="glycosylation site" description="N-linked (GlcNAc...) asparagine" evidence="2">
    <location>
        <position position="234"/>
    </location>
</feature>
<feature type="glycosylation site" description="N-linked (GlcNAc...) asparagine" evidence="2">
    <location>
        <position position="318"/>
    </location>
</feature>
<feature type="glycosylation site" description="N-linked (GlcNAc...) asparagine" evidence="2">
    <location>
        <position position="416"/>
    </location>
</feature>
<feature type="glycosylation site" description="N-linked (GlcNAc...) asparagine" evidence="2">
    <location>
        <position position="436"/>
    </location>
</feature>
<feature type="glycosylation site" description="N-linked (GlcNAc...) asparagine" evidence="2">
    <location>
        <position position="462"/>
    </location>
</feature>
<feature type="glycosylation site" description="N-linked (GlcNAc...) asparagine" evidence="2">
    <location>
        <position position="498"/>
    </location>
</feature>
<feature type="glycosylation site" description="N-linked (GlcNAc...) asparagine" evidence="2">
    <location>
        <position position="521"/>
    </location>
</feature>
<protein>
    <recommendedName>
        <fullName>Probable LRR receptor-like serine/threonine-protein kinase At5g48740</fullName>
        <ecNumber>2.7.11.1</ecNumber>
    </recommendedName>
</protein>
<accession>C0LGV0</accession>
<accession>Q9FKC2</accession>
<proteinExistence type="evidence at protein level"/>
<keyword id="KW-0067">ATP-binding</keyword>
<keyword id="KW-0325">Glycoprotein</keyword>
<keyword id="KW-0418">Kinase</keyword>
<keyword id="KW-0433">Leucine-rich repeat</keyword>
<keyword id="KW-0472">Membrane</keyword>
<keyword id="KW-0547">Nucleotide-binding</keyword>
<keyword id="KW-0597">Phosphoprotein</keyword>
<keyword id="KW-0675">Receptor</keyword>
<keyword id="KW-1185">Reference proteome</keyword>
<keyword id="KW-0677">Repeat</keyword>
<keyword id="KW-0723">Serine/threonine-protein kinase</keyword>
<keyword id="KW-0732">Signal</keyword>
<keyword id="KW-0808">Transferase</keyword>
<keyword id="KW-0812">Transmembrane</keyword>
<keyword id="KW-1133">Transmembrane helix</keyword>
<sequence>MLFWVLLSSFCVFCFSSPDGFLSLSCGGSSYTAAYNISWVSDNDYIETGNTTTVTYAEGNSTSSVPIRLFPDPQGRQCYKLPVRKDLSSVLIRATFVYRNYDSQNSPPAFHVSLGRRITSTVDLRTNDPWIEELVWPVNNDSLLLCLLAVKGRGIPVISSLEVRPLPLGSYKYSLEGSPDIILRRSYRINSGYTNGTIRYPSDPFDRIWDPDQSYSPFHASWSFNGLTKLNSFNITENPPASVLKTARILARKESLSYTLSLHTPGDYYIILYFAGILSLSPSFSVTINDEVKQSDYTVTSSEAGTLYFTQKGISKLNITLRKIKFNPQVSALEVYEILQIPPEASSTTVSALKVIEQFTGQDLGWQDDPCTPLPWNHIECEGNRVTSLFLSKINLRSISPTFGDLLDLKTLDLHNTSLTGAIQNVGSLKDLQKLNLSFNQLESFGSELEDLVNLEVLDLQNNSLQGSVPETLGKLKKLRLLNLENNNLVGPLPQSLNITGLEVRITGNPCLSFSSISCNNVSSTIDTPQVTIPINKKQRKQNRIAILLGVSGGALFATFLVFVFMSIFTRRQRNKERDITRAQLKMQNWNASRIFSHKEIKSATRNFKEVIGRGSFGAVYRGKLPDGKQVAVKVRFDRTQLGADSFINEVHLLSQIRHQNLVSFEGFCYEPKRQILVYEYLSGGSLADHLYGPRSKRHSLNWVSRLKVAVDAAKGLDYLHNGSEPRIIHRDVKSSNILLDKDMNAKVSDFGLSKQFTKADASHITTVVKGTAGYLDPEYYSTLQLTEKSDVYSFGVVLLELICGREPLSHSGSPDSFNLVLWARPNLQAGAFEIVDDILKETFDPASMKKAASIAIRCVGRDASGRPSIAEVLTKLKEAYSLQLSYLAASAHTD</sequence>
<comment type="catalytic activity">
    <reaction>
        <text>L-seryl-[protein] + ATP = O-phospho-L-seryl-[protein] + ADP + H(+)</text>
        <dbReference type="Rhea" id="RHEA:17989"/>
        <dbReference type="Rhea" id="RHEA-COMP:9863"/>
        <dbReference type="Rhea" id="RHEA-COMP:11604"/>
        <dbReference type="ChEBI" id="CHEBI:15378"/>
        <dbReference type="ChEBI" id="CHEBI:29999"/>
        <dbReference type="ChEBI" id="CHEBI:30616"/>
        <dbReference type="ChEBI" id="CHEBI:83421"/>
        <dbReference type="ChEBI" id="CHEBI:456216"/>
        <dbReference type="EC" id="2.7.11.1"/>
    </reaction>
</comment>
<comment type="catalytic activity">
    <reaction>
        <text>L-threonyl-[protein] + ATP = O-phospho-L-threonyl-[protein] + ADP + H(+)</text>
        <dbReference type="Rhea" id="RHEA:46608"/>
        <dbReference type="Rhea" id="RHEA-COMP:11060"/>
        <dbReference type="Rhea" id="RHEA-COMP:11605"/>
        <dbReference type="ChEBI" id="CHEBI:15378"/>
        <dbReference type="ChEBI" id="CHEBI:30013"/>
        <dbReference type="ChEBI" id="CHEBI:30616"/>
        <dbReference type="ChEBI" id="CHEBI:61977"/>
        <dbReference type="ChEBI" id="CHEBI:456216"/>
        <dbReference type="EC" id="2.7.11.1"/>
    </reaction>
</comment>
<comment type="interaction">
    <interactant intactId="EBI-17091250">
        <id>C0LGV0</id>
    </interactant>
    <interactant intactId="EBI-17121474">
        <id>Q93ZS4</id>
        <label>NIK3</label>
    </interactant>
    <organismsDiffer>false</organismsDiffer>
    <experiments>2</experiments>
</comment>
<comment type="subcellular location">
    <subcellularLocation>
        <location evidence="5">Membrane</location>
        <topology evidence="5">Single-pass type I membrane protein</topology>
    </subcellularLocation>
</comment>
<comment type="similarity">
    <text evidence="3">Belongs to the protein kinase superfamily. Ser/Thr protein kinase family.</text>
</comment>
<comment type="sequence caution" evidence="5">
    <conflict type="erroneous gene model prediction">
        <sequence resource="EMBL-CDS" id="BAB09427"/>
    </conflict>
</comment>
<organism>
    <name type="scientific">Arabidopsis thaliana</name>
    <name type="common">Mouse-ear cress</name>
    <dbReference type="NCBI Taxonomy" id="3702"/>
    <lineage>
        <taxon>Eukaryota</taxon>
        <taxon>Viridiplantae</taxon>
        <taxon>Streptophyta</taxon>
        <taxon>Embryophyta</taxon>
        <taxon>Tracheophyta</taxon>
        <taxon>Spermatophyta</taxon>
        <taxon>Magnoliopsida</taxon>
        <taxon>eudicotyledons</taxon>
        <taxon>Gunneridae</taxon>
        <taxon>Pentapetalae</taxon>
        <taxon>rosids</taxon>
        <taxon>malvids</taxon>
        <taxon>Brassicales</taxon>
        <taxon>Brassicaceae</taxon>
        <taxon>Camelineae</taxon>
        <taxon>Arabidopsis</taxon>
    </lineage>
</organism>
<reference key="1">
    <citation type="journal article" date="1998" name="DNA Res.">
        <title>Structural analysis of Arabidopsis thaliana chromosome 5. VI. Sequence features of the regions of 1,367,185 bp covered by 19 physically assigned P1 and TAC clones.</title>
        <authorList>
            <person name="Kotani H."/>
            <person name="Nakamura Y."/>
            <person name="Sato S."/>
            <person name="Asamizu E."/>
            <person name="Kaneko T."/>
            <person name="Miyajima N."/>
            <person name="Tabata S."/>
        </authorList>
    </citation>
    <scope>NUCLEOTIDE SEQUENCE [LARGE SCALE GENOMIC DNA]</scope>
    <source>
        <strain>cv. Columbia</strain>
    </source>
</reference>
<reference key="2">
    <citation type="journal article" date="2017" name="Plant J.">
        <title>Araport11: a complete reannotation of the Arabidopsis thaliana reference genome.</title>
        <authorList>
            <person name="Cheng C.Y."/>
            <person name="Krishnakumar V."/>
            <person name="Chan A.P."/>
            <person name="Thibaud-Nissen F."/>
            <person name="Schobel S."/>
            <person name="Town C.D."/>
        </authorList>
    </citation>
    <scope>GENOME REANNOTATION</scope>
    <source>
        <strain>cv. Columbia</strain>
    </source>
</reference>
<reference key="3">
    <citation type="journal article" date="2010" name="BMC Genomics">
        <title>Genome-wide cloning and sequence analysis of leucine-rich repeat receptor-like protein kinase genes in Arabidopsis thaliana.</title>
        <authorList>
            <person name="Gou X."/>
            <person name="He K."/>
            <person name="Yang H."/>
            <person name="Yuan T."/>
            <person name="Lin H."/>
            <person name="Clouse S.D."/>
            <person name="Li J."/>
        </authorList>
    </citation>
    <scope>NUCLEOTIDE SEQUENCE [LARGE SCALE MRNA]</scope>
    <source>
        <strain>cv. Columbia</strain>
    </source>
</reference>